<sequence length="342" mass="36355">MKFLDLCKVYIRSGGGGGGCVSFRREKFIEFGGPDGGDGGNGGSVWAEAVDGLNTLIDFRYQQHFFAKSGQPGMGSQRTGRSGDDIVLKVPVGTEIIDEDEETVIADLTEVGQRVLLAQGGNGGWGNLRFKSSTNRAPARANPGQPGIDRTIWLRLKLIADAGLLGLPNAGKSTFLSATSNARPKIADYPFTTLVPNLGVVGVDGKEFVIADIPGLIEGASEGRGLGDQFLAHVERCSVLLHLVDGTSSTIVKDYRTIIGELEAYGGDLALKPRITAMNKIDAMDSKQISDRRRALEKATGGKVFTISGVAGTGLMDVLRALWAEIDGARGDKVEEHAPWQP</sequence>
<reference key="1">
    <citation type="journal article" date="2009" name="J. Bacteriol.">
        <title>Complete genome sequence of Rhodobacter sphaeroides KD131.</title>
        <authorList>
            <person name="Lim S.-K."/>
            <person name="Kim S.J."/>
            <person name="Cha S.H."/>
            <person name="Oh Y.-K."/>
            <person name="Rhee H.-J."/>
            <person name="Kim M.-S."/>
            <person name="Lee J.K."/>
        </authorList>
    </citation>
    <scope>NUCLEOTIDE SEQUENCE [LARGE SCALE GENOMIC DNA]</scope>
    <source>
        <strain>KD131 / KCTC 12085</strain>
    </source>
</reference>
<proteinExistence type="inferred from homology"/>
<comment type="function">
    <text evidence="1">An essential GTPase which binds GTP, GDP and possibly (p)ppGpp with moderate affinity, with high nucleotide exchange rates and a fairly low GTP hydrolysis rate. Plays a role in control of the cell cycle, stress response, ribosome biogenesis and in those bacteria that undergo differentiation, in morphogenesis control.</text>
</comment>
<comment type="cofactor">
    <cofactor evidence="1">
        <name>Mg(2+)</name>
        <dbReference type="ChEBI" id="CHEBI:18420"/>
    </cofactor>
</comment>
<comment type="subunit">
    <text evidence="1">Monomer.</text>
</comment>
<comment type="subcellular location">
    <subcellularLocation>
        <location evidence="1">Cytoplasm</location>
    </subcellularLocation>
</comment>
<comment type="similarity">
    <text evidence="1">Belongs to the TRAFAC class OBG-HflX-like GTPase superfamily. OBG GTPase family.</text>
</comment>
<accession>B9KW04</accession>
<organism>
    <name type="scientific">Cereibacter sphaeroides (strain KD131 / KCTC 12085)</name>
    <name type="common">Rhodobacter sphaeroides</name>
    <dbReference type="NCBI Taxonomy" id="557760"/>
    <lineage>
        <taxon>Bacteria</taxon>
        <taxon>Pseudomonadati</taxon>
        <taxon>Pseudomonadota</taxon>
        <taxon>Alphaproteobacteria</taxon>
        <taxon>Rhodobacterales</taxon>
        <taxon>Paracoccaceae</taxon>
        <taxon>Cereibacter</taxon>
    </lineage>
</organism>
<evidence type="ECO:0000255" key="1">
    <source>
        <dbReference type="HAMAP-Rule" id="MF_01454"/>
    </source>
</evidence>
<evidence type="ECO:0000255" key="2">
    <source>
        <dbReference type="PROSITE-ProRule" id="PRU01231"/>
    </source>
</evidence>
<protein>
    <recommendedName>
        <fullName evidence="1">GTPase Obg</fullName>
        <ecNumber evidence="1">3.6.5.-</ecNumber>
    </recommendedName>
    <alternativeName>
        <fullName evidence="1">GTP-binding protein Obg</fullName>
    </alternativeName>
</protein>
<gene>
    <name evidence="1" type="primary">obg</name>
    <name type="ordered locus">RSKD131_3148</name>
</gene>
<feature type="chain" id="PRO_0000386185" description="GTPase Obg">
    <location>
        <begin position="1"/>
        <end position="342"/>
    </location>
</feature>
<feature type="domain" description="Obg" evidence="2">
    <location>
        <begin position="1"/>
        <end position="159"/>
    </location>
</feature>
<feature type="domain" description="OBG-type G" evidence="1">
    <location>
        <begin position="160"/>
        <end position="327"/>
    </location>
</feature>
<feature type="binding site" evidence="1">
    <location>
        <begin position="166"/>
        <end position="173"/>
    </location>
    <ligand>
        <name>GTP</name>
        <dbReference type="ChEBI" id="CHEBI:37565"/>
    </ligand>
</feature>
<feature type="binding site" evidence="1">
    <location>
        <position position="173"/>
    </location>
    <ligand>
        <name>Mg(2+)</name>
        <dbReference type="ChEBI" id="CHEBI:18420"/>
    </ligand>
</feature>
<feature type="binding site" evidence="1">
    <location>
        <begin position="191"/>
        <end position="195"/>
    </location>
    <ligand>
        <name>GTP</name>
        <dbReference type="ChEBI" id="CHEBI:37565"/>
    </ligand>
</feature>
<feature type="binding site" evidence="1">
    <location>
        <position position="193"/>
    </location>
    <ligand>
        <name>Mg(2+)</name>
        <dbReference type="ChEBI" id="CHEBI:18420"/>
    </ligand>
</feature>
<feature type="binding site" evidence="1">
    <location>
        <begin position="212"/>
        <end position="215"/>
    </location>
    <ligand>
        <name>GTP</name>
        <dbReference type="ChEBI" id="CHEBI:37565"/>
    </ligand>
</feature>
<feature type="binding site" evidence="1">
    <location>
        <begin position="279"/>
        <end position="282"/>
    </location>
    <ligand>
        <name>GTP</name>
        <dbReference type="ChEBI" id="CHEBI:37565"/>
    </ligand>
</feature>
<feature type="binding site" evidence="1">
    <location>
        <begin position="308"/>
        <end position="310"/>
    </location>
    <ligand>
        <name>GTP</name>
        <dbReference type="ChEBI" id="CHEBI:37565"/>
    </ligand>
</feature>
<keyword id="KW-0963">Cytoplasm</keyword>
<keyword id="KW-0342">GTP-binding</keyword>
<keyword id="KW-0378">Hydrolase</keyword>
<keyword id="KW-0460">Magnesium</keyword>
<keyword id="KW-0479">Metal-binding</keyword>
<keyword id="KW-0547">Nucleotide-binding</keyword>
<name>OBG_CERSK</name>
<dbReference type="EC" id="3.6.5.-" evidence="1"/>
<dbReference type="EMBL" id="CP001151">
    <property type="protein sequence ID" value="ACM03008.1"/>
    <property type="molecule type" value="Genomic_DNA"/>
</dbReference>
<dbReference type="RefSeq" id="WP_009566777.1">
    <property type="nucleotide sequence ID" value="NC_011958.1"/>
</dbReference>
<dbReference type="SMR" id="B9KW04"/>
<dbReference type="GeneID" id="67448503"/>
<dbReference type="KEGG" id="rsk:RSKD131_3148"/>
<dbReference type="HOGENOM" id="CLU_011747_2_0_5"/>
<dbReference type="GO" id="GO:0005737">
    <property type="term" value="C:cytoplasm"/>
    <property type="evidence" value="ECO:0007669"/>
    <property type="project" value="UniProtKB-SubCell"/>
</dbReference>
<dbReference type="GO" id="GO:0005525">
    <property type="term" value="F:GTP binding"/>
    <property type="evidence" value="ECO:0007669"/>
    <property type="project" value="UniProtKB-UniRule"/>
</dbReference>
<dbReference type="GO" id="GO:0003924">
    <property type="term" value="F:GTPase activity"/>
    <property type="evidence" value="ECO:0007669"/>
    <property type="project" value="UniProtKB-UniRule"/>
</dbReference>
<dbReference type="GO" id="GO:0000287">
    <property type="term" value="F:magnesium ion binding"/>
    <property type="evidence" value="ECO:0007669"/>
    <property type="project" value="InterPro"/>
</dbReference>
<dbReference type="GO" id="GO:0042254">
    <property type="term" value="P:ribosome biogenesis"/>
    <property type="evidence" value="ECO:0007669"/>
    <property type="project" value="UniProtKB-UniRule"/>
</dbReference>
<dbReference type="CDD" id="cd01898">
    <property type="entry name" value="Obg"/>
    <property type="match status" value="1"/>
</dbReference>
<dbReference type="FunFam" id="2.70.210.12:FF:000001">
    <property type="entry name" value="GTPase Obg"/>
    <property type="match status" value="1"/>
</dbReference>
<dbReference type="Gene3D" id="2.70.210.12">
    <property type="entry name" value="GTP1/OBG domain"/>
    <property type="match status" value="1"/>
</dbReference>
<dbReference type="Gene3D" id="3.40.50.300">
    <property type="entry name" value="P-loop containing nucleotide triphosphate hydrolases"/>
    <property type="match status" value="1"/>
</dbReference>
<dbReference type="HAMAP" id="MF_01454">
    <property type="entry name" value="GTPase_Obg"/>
    <property type="match status" value="1"/>
</dbReference>
<dbReference type="InterPro" id="IPR031167">
    <property type="entry name" value="G_OBG"/>
</dbReference>
<dbReference type="InterPro" id="IPR006073">
    <property type="entry name" value="GTP-bd"/>
</dbReference>
<dbReference type="InterPro" id="IPR014100">
    <property type="entry name" value="GTP-bd_Obg/CgtA"/>
</dbReference>
<dbReference type="InterPro" id="IPR006074">
    <property type="entry name" value="GTP1-OBG_CS"/>
</dbReference>
<dbReference type="InterPro" id="IPR006169">
    <property type="entry name" value="GTP1_OBG_dom"/>
</dbReference>
<dbReference type="InterPro" id="IPR036726">
    <property type="entry name" value="GTP1_OBG_dom_sf"/>
</dbReference>
<dbReference type="InterPro" id="IPR045086">
    <property type="entry name" value="OBG_GTPase"/>
</dbReference>
<dbReference type="InterPro" id="IPR027417">
    <property type="entry name" value="P-loop_NTPase"/>
</dbReference>
<dbReference type="NCBIfam" id="TIGR02729">
    <property type="entry name" value="Obg_CgtA"/>
    <property type="match status" value="1"/>
</dbReference>
<dbReference type="NCBIfam" id="NF008955">
    <property type="entry name" value="PRK12297.1"/>
    <property type="match status" value="1"/>
</dbReference>
<dbReference type="NCBIfam" id="NF008956">
    <property type="entry name" value="PRK12299.1"/>
    <property type="match status" value="1"/>
</dbReference>
<dbReference type="PANTHER" id="PTHR11702">
    <property type="entry name" value="DEVELOPMENTALLY REGULATED GTP-BINDING PROTEIN-RELATED"/>
    <property type="match status" value="1"/>
</dbReference>
<dbReference type="PANTHER" id="PTHR11702:SF31">
    <property type="entry name" value="MITOCHONDRIAL RIBOSOME-ASSOCIATED GTPASE 2"/>
    <property type="match status" value="1"/>
</dbReference>
<dbReference type="Pfam" id="PF01018">
    <property type="entry name" value="GTP1_OBG"/>
    <property type="match status" value="1"/>
</dbReference>
<dbReference type="Pfam" id="PF01926">
    <property type="entry name" value="MMR_HSR1"/>
    <property type="match status" value="1"/>
</dbReference>
<dbReference type="PIRSF" id="PIRSF002401">
    <property type="entry name" value="GTP_bd_Obg/CgtA"/>
    <property type="match status" value="1"/>
</dbReference>
<dbReference type="PRINTS" id="PR00326">
    <property type="entry name" value="GTP1OBG"/>
</dbReference>
<dbReference type="SUPFAM" id="SSF82051">
    <property type="entry name" value="Obg GTP-binding protein N-terminal domain"/>
    <property type="match status" value="1"/>
</dbReference>
<dbReference type="SUPFAM" id="SSF52540">
    <property type="entry name" value="P-loop containing nucleoside triphosphate hydrolases"/>
    <property type="match status" value="1"/>
</dbReference>
<dbReference type="PROSITE" id="PS51710">
    <property type="entry name" value="G_OBG"/>
    <property type="match status" value="1"/>
</dbReference>
<dbReference type="PROSITE" id="PS00905">
    <property type="entry name" value="GTP1_OBG"/>
    <property type="match status" value="1"/>
</dbReference>
<dbReference type="PROSITE" id="PS51883">
    <property type="entry name" value="OBG"/>
    <property type="match status" value="1"/>
</dbReference>